<organism>
    <name type="scientific">Escherichia coli O45:K1 (strain S88 / ExPEC)</name>
    <dbReference type="NCBI Taxonomy" id="585035"/>
    <lineage>
        <taxon>Bacteria</taxon>
        <taxon>Pseudomonadati</taxon>
        <taxon>Pseudomonadota</taxon>
        <taxon>Gammaproteobacteria</taxon>
        <taxon>Enterobacterales</taxon>
        <taxon>Enterobacteriaceae</taxon>
        <taxon>Escherichia</taxon>
    </lineage>
</organism>
<feature type="chain" id="PRO_1000188569" description="Dual-specificity RNA methyltransferase RlmN">
    <location>
        <begin position="1"/>
        <end position="384"/>
    </location>
</feature>
<feature type="domain" description="Radical SAM core" evidence="2">
    <location>
        <begin position="111"/>
        <end position="350"/>
    </location>
</feature>
<feature type="active site" description="Proton acceptor" evidence="1">
    <location>
        <position position="105"/>
    </location>
</feature>
<feature type="active site" description="S-methylcysteine intermediate" evidence="1">
    <location>
        <position position="355"/>
    </location>
</feature>
<feature type="binding site" evidence="1">
    <location>
        <position position="125"/>
    </location>
    <ligand>
        <name>[4Fe-4S] cluster</name>
        <dbReference type="ChEBI" id="CHEBI:49883"/>
        <note>4Fe-4S-S-AdoMet</note>
    </ligand>
</feature>
<feature type="binding site" evidence="1">
    <location>
        <position position="129"/>
    </location>
    <ligand>
        <name>[4Fe-4S] cluster</name>
        <dbReference type="ChEBI" id="CHEBI:49883"/>
        <note>4Fe-4S-S-AdoMet</note>
    </ligand>
</feature>
<feature type="binding site" evidence="1">
    <location>
        <position position="132"/>
    </location>
    <ligand>
        <name>[4Fe-4S] cluster</name>
        <dbReference type="ChEBI" id="CHEBI:49883"/>
        <note>4Fe-4S-S-AdoMet</note>
    </ligand>
</feature>
<feature type="binding site" evidence="1">
    <location>
        <begin position="179"/>
        <end position="180"/>
    </location>
    <ligand>
        <name>S-adenosyl-L-methionine</name>
        <dbReference type="ChEBI" id="CHEBI:59789"/>
    </ligand>
</feature>
<feature type="binding site" evidence="1">
    <location>
        <position position="211"/>
    </location>
    <ligand>
        <name>S-adenosyl-L-methionine</name>
        <dbReference type="ChEBI" id="CHEBI:59789"/>
    </ligand>
</feature>
<feature type="binding site" evidence="1">
    <location>
        <begin position="233"/>
        <end position="235"/>
    </location>
    <ligand>
        <name>S-adenosyl-L-methionine</name>
        <dbReference type="ChEBI" id="CHEBI:59789"/>
    </ligand>
</feature>
<feature type="binding site" evidence="1">
    <location>
        <position position="312"/>
    </location>
    <ligand>
        <name>S-adenosyl-L-methionine</name>
        <dbReference type="ChEBI" id="CHEBI:59789"/>
    </ligand>
</feature>
<feature type="disulfide bond" description="(transient)" evidence="1">
    <location>
        <begin position="118"/>
        <end position="355"/>
    </location>
</feature>
<evidence type="ECO:0000255" key="1">
    <source>
        <dbReference type="HAMAP-Rule" id="MF_01849"/>
    </source>
</evidence>
<evidence type="ECO:0000255" key="2">
    <source>
        <dbReference type="PROSITE-ProRule" id="PRU01266"/>
    </source>
</evidence>
<keyword id="KW-0004">4Fe-4S</keyword>
<keyword id="KW-0963">Cytoplasm</keyword>
<keyword id="KW-1015">Disulfide bond</keyword>
<keyword id="KW-0408">Iron</keyword>
<keyword id="KW-0411">Iron-sulfur</keyword>
<keyword id="KW-0479">Metal-binding</keyword>
<keyword id="KW-0489">Methyltransferase</keyword>
<keyword id="KW-1185">Reference proteome</keyword>
<keyword id="KW-0698">rRNA processing</keyword>
<keyword id="KW-0949">S-adenosyl-L-methionine</keyword>
<keyword id="KW-0808">Transferase</keyword>
<keyword id="KW-0819">tRNA processing</keyword>
<dbReference type="EC" id="2.1.1.192" evidence="1"/>
<dbReference type="EMBL" id="CU928161">
    <property type="protein sequence ID" value="CAR03960.1"/>
    <property type="molecule type" value="Genomic_DNA"/>
</dbReference>
<dbReference type="RefSeq" id="WP_000003317.1">
    <property type="nucleotide sequence ID" value="NC_011742.1"/>
</dbReference>
<dbReference type="SMR" id="B7MI02"/>
<dbReference type="KEGG" id="ecz:ECS88_2693"/>
<dbReference type="HOGENOM" id="CLU_029101_0_0_6"/>
<dbReference type="Proteomes" id="UP000000747">
    <property type="component" value="Chromosome"/>
</dbReference>
<dbReference type="GO" id="GO:0005737">
    <property type="term" value="C:cytoplasm"/>
    <property type="evidence" value="ECO:0007669"/>
    <property type="project" value="UniProtKB-SubCell"/>
</dbReference>
<dbReference type="GO" id="GO:0051539">
    <property type="term" value="F:4 iron, 4 sulfur cluster binding"/>
    <property type="evidence" value="ECO:0007669"/>
    <property type="project" value="UniProtKB-UniRule"/>
</dbReference>
<dbReference type="GO" id="GO:0046872">
    <property type="term" value="F:metal ion binding"/>
    <property type="evidence" value="ECO:0007669"/>
    <property type="project" value="UniProtKB-KW"/>
</dbReference>
<dbReference type="GO" id="GO:0070040">
    <property type="term" value="F:rRNA (adenine(2503)-C2-)-methyltransferase activity"/>
    <property type="evidence" value="ECO:0007669"/>
    <property type="project" value="UniProtKB-UniRule"/>
</dbReference>
<dbReference type="GO" id="GO:0019843">
    <property type="term" value="F:rRNA binding"/>
    <property type="evidence" value="ECO:0007669"/>
    <property type="project" value="UniProtKB-UniRule"/>
</dbReference>
<dbReference type="GO" id="GO:0002935">
    <property type="term" value="F:tRNA (adenine(37)-C2)-methyltransferase activity"/>
    <property type="evidence" value="ECO:0007669"/>
    <property type="project" value="UniProtKB-UniRule"/>
</dbReference>
<dbReference type="GO" id="GO:0000049">
    <property type="term" value="F:tRNA binding"/>
    <property type="evidence" value="ECO:0007669"/>
    <property type="project" value="UniProtKB-UniRule"/>
</dbReference>
<dbReference type="GO" id="GO:0070475">
    <property type="term" value="P:rRNA base methylation"/>
    <property type="evidence" value="ECO:0007669"/>
    <property type="project" value="UniProtKB-UniRule"/>
</dbReference>
<dbReference type="GO" id="GO:0030488">
    <property type="term" value="P:tRNA methylation"/>
    <property type="evidence" value="ECO:0007669"/>
    <property type="project" value="UniProtKB-UniRule"/>
</dbReference>
<dbReference type="CDD" id="cd01335">
    <property type="entry name" value="Radical_SAM"/>
    <property type="match status" value="1"/>
</dbReference>
<dbReference type="FunFam" id="1.10.150.530:FF:000001">
    <property type="entry name" value="Dual-specificity RNA methyltransferase RlmN"/>
    <property type="match status" value="1"/>
</dbReference>
<dbReference type="FunFam" id="3.20.20.70:FF:000008">
    <property type="entry name" value="Dual-specificity RNA methyltransferase RlmN"/>
    <property type="match status" value="1"/>
</dbReference>
<dbReference type="Gene3D" id="1.10.150.530">
    <property type="match status" value="1"/>
</dbReference>
<dbReference type="Gene3D" id="3.20.20.70">
    <property type="entry name" value="Aldolase class I"/>
    <property type="match status" value="1"/>
</dbReference>
<dbReference type="HAMAP" id="MF_01849">
    <property type="entry name" value="RNA_methyltr_RlmN"/>
    <property type="match status" value="1"/>
</dbReference>
<dbReference type="InterPro" id="IPR013785">
    <property type="entry name" value="Aldolase_TIM"/>
</dbReference>
<dbReference type="InterPro" id="IPR040072">
    <property type="entry name" value="Methyltransferase_A"/>
</dbReference>
<dbReference type="InterPro" id="IPR048641">
    <property type="entry name" value="RlmN_N"/>
</dbReference>
<dbReference type="InterPro" id="IPR027492">
    <property type="entry name" value="RNA_MTrfase_RlmN"/>
</dbReference>
<dbReference type="InterPro" id="IPR004383">
    <property type="entry name" value="rRNA_lsu_MTrfase_RlmN/Cfr"/>
</dbReference>
<dbReference type="InterPro" id="IPR007197">
    <property type="entry name" value="rSAM"/>
</dbReference>
<dbReference type="NCBIfam" id="NF008396">
    <property type="entry name" value="PRK11194.1"/>
    <property type="match status" value="1"/>
</dbReference>
<dbReference type="NCBIfam" id="TIGR00048">
    <property type="entry name" value="rRNA_mod_RlmN"/>
    <property type="match status" value="1"/>
</dbReference>
<dbReference type="PANTHER" id="PTHR30544">
    <property type="entry name" value="23S RRNA METHYLTRANSFERASE"/>
    <property type="match status" value="1"/>
</dbReference>
<dbReference type="PANTHER" id="PTHR30544:SF5">
    <property type="entry name" value="RADICAL SAM CORE DOMAIN-CONTAINING PROTEIN"/>
    <property type="match status" value="1"/>
</dbReference>
<dbReference type="Pfam" id="PF04055">
    <property type="entry name" value="Radical_SAM"/>
    <property type="match status" value="1"/>
</dbReference>
<dbReference type="Pfam" id="PF21016">
    <property type="entry name" value="RlmN_N"/>
    <property type="match status" value="1"/>
</dbReference>
<dbReference type="PIRSF" id="PIRSF006004">
    <property type="entry name" value="CHP00048"/>
    <property type="match status" value="1"/>
</dbReference>
<dbReference type="SFLD" id="SFLDF00275">
    <property type="entry name" value="adenosine_C2_methyltransferase"/>
    <property type="match status" value="1"/>
</dbReference>
<dbReference type="SFLD" id="SFLDG01062">
    <property type="entry name" value="methyltransferase_(Class_A)"/>
    <property type="match status" value="1"/>
</dbReference>
<dbReference type="SUPFAM" id="SSF102114">
    <property type="entry name" value="Radical SAM enzymes"/>
    <property type="match status" value="1"/>
</dbReference>
<dbReference type="PROSITE" id="PS51918">
    <property type="entry name" value="RADICAL_SAM"/>
    <property type="match status" value="1"/>
</dbReference>
<reference key="1">
    <citation type="journal article" date="2009" name="PLoS Genet.">
        <title>Organised genome dynamics in the Escherichia coli species results in highly diverse adaptive paths.</title>
        <authorList>
            <person name="Touchon M."/>
            <person name="Hoede C."/>
            <person name="Tenaillon O."/>
            <person name="Barbe V."/>
            <person name="Baeriswyl S."/>
            <person name="Bidet P."/>
            <person name="Bingen E."/>
            <person name="Bonacorsi S."/>
            <person name="Bouchier C."/>
            <person name="Bouvet O."/>
            <person name="Calteau A."/>
            <person name="Chiapello H."/>
            <person name="Clermont O."/>
            <person name="Cruveiller S."/>
            <person name="Danchin A."/>
            <person name="Diard M."/>
            <person name="Dossat C."/>
            <person name="Karoui M.E."/>
            <person name="Frapy E."/>
            <person name="Garry L."/>
            <person name="Ghigo J.M."/>
            <person name="Gilles A.M."/>
            <person name="Johnson J."/>
            <person name="Le Bouguenec C."/>
            <person name="Lescat M."/>
            <person name="Mangenot S."/>
            <person name="Martinez-Jehanne V."/>
            <person name="Matic I."/>
            <person name="Nassif X."/>
            <person name="Oztas S."/>
            <person name="Petit M.A."/>
            <person name="Pichon C."/>
            <person name="Rouy Z."/>
            <person name="Ruf C.S."/>
            <person name="Schneider D."/>
            <person name="Tourret J."/>
            <person name="Vacherie B."/>
            <person name="Vallenet D."/>
            <person name="Medigue C."/>
            <person name="Rocha E.P.C."/>
            <person name="Denamur E."/>
        </authorList>
    </citation>
    <scope>NUCLEOTIDE SEQUENCE [LARGE SCALE GENOMIC DNA]</scope>
    <source>
        <strain>S88 / ExPEC</strain>
    </source>
</reference>
<comment type="function">
    <text evidence="1">Specifically methylates position 2 of adenine 2503 in 23S rRNA and position 2 of adenine 37 in tRNAs. m2A2503 modification seems to play a crucial role in the proofreading step occurring at the peptidyl transferase center and thus would serve to optimize ribosomal fidelity.</text>
</comment>
<comment type="catalytic activity">
    <reaction evidence="1">
        <text>adenosine(2503) in 23S rRNA + 2 reduced [2Fe-2S]-[ferredoxin] + 2 S-adenosyl-L-methionine = 2-methyladenosine(2503) in 23S rRNA + 5'-deoxyadenosine + L-methionine + 2 oxidized [2Fe-2S]-[ferredoxin] + S-adenosyl-L-homocysteine</text>
        <dbReference type="Rhea" id="RHEA:42916"/>
        <dbReference type="Rhea" id="RHEA-COMP:10000"/>
        <dbReference type="Rhea" id="RHEA-COMP:10001"/>
        <dbReference type="Rhea" id="RHEA-COMP:10152"/>
        <dbReference type="Rhea" id="RHEA-COMP:10282"/>
        <dbReference type="ChEBI" id="CHEBI:17319"/>
        <dbReference type="ChEBI" id="CHEBI:33737"/>
        <dbReference type="ChEBI" id="CHEBI:33738"/>
        <dbReference type="ChEBI" id="CHEBI:57844"/>
        <dbReference type="ChEBI" id="CHEBI:57856"/>
        <dbReference type="ChEBI" id="CHEBI:59789"/>
        <dbReference type="ChEBI" id="CHEBI:74411"/>
        <dbReference type="ChEBI" id="CHEBI:74497"/>
        <dbReference type="EC" id="2.1.1.192"/>
    </reaction>
</comment>
<comment type="catalytic activity">
    <reaction evidence="1">
        <text>adenosine(37) in tRNA + 2 reduced [2Fe-2S]-[ferredoxin] + 2 S-adenosyl-L-methionine = 2-methyladenosine(37) in tRNA + 5'-deoxyadenosine + L-methionine + 2 oxidized [2Fe-2S]-[ferredoxin] + S-adenosyl-L-homocysteine</text>
        <dbReference type="Rhea" id="RHEA:43332"/>
        <dbReference type="Rhea" id="RHEA-COMP:10000"/>
        <dbReference type="Rhea" id="RHEA-COMP:10001"/>
        <dbReference type="Rhea" id="RHEA-COMP:10162"/>
        <dbReference type="Rhea" id="RHEA-COMP:10485"/>
        <dbReference type="ChEBI" id="CHEBI:17319"/>
        <dbReference type="ChEBI" id="CHEBI:33737"/>
        <dbReference type="ChEBI" id="CHEBI:33738"/>
        <dbReference type="ChEBI" id="CHEBI:57844"/>
        <dbReference type="ChEBI" id="CHEBI:57856"/>
        <dbReference type="ChEBI" id="CHEBI:59789"/>
        <dbReference type="ChEBI" id="CHEBI:74411"/>
        <dbReference type="ChEBI" id="CHEBI:74497"/>
        <dbReference type="EC" id="2.1.1.192"/>
    </reaction>
</comment>
<comment type="cofactor">
    <cofactor evidence="1">
        <name>[4Fe-4S] cluster</name>
        <dbReference type="ChEBI" id="CHEBI:49883"/>
    </cofactor>
    <text evidence="1">Binds 1 [4Fe-4S] cluster. The cluster is coordinated with 3 cysteines and an exchangeable S-adenosyl-L-methionine.</text>
</comment>
<comment type="subcellular location">
    <subcellularLocation>
        <location evidence="1">Cytoplasm</location>
    </subcellularLocation>
</comment>
<comment type="miscellaneous">
    <text evidence="1">Reaction proceeds by a ping-pong mechanism involving intermediate methylation of a conserved cysteine residue.</text>
</comment>
<comment type="similarity">
    <text evidence="1">Belongs to the radical SAM superfamily. RlmN family.</text>
</comment>
<name>RLMN_ECO45</name>
<accession>B7MI02</accession>
<gene>
    <name evidence="1" type="primary">rlmN</name>
    <name type="ordered locus">ECS88_2693</name>
</gene>
<protein>
    <recommendedName>
        <fullName evidence="1">Dual-specificity RNA methyltransferase RlmN</fullName>
        <ecNumber evidence="1">2.1.1.192</ecNumber>
    </recommendedName>
    <alternativeName>
        <fullName evidence="1">23S rRNA (adenine(2503)-C(2))-methyltransferase</fullName>
    </alternativeName>
    <alternativeName>
        <fullName evidence="1">23S rRNA m2A2503 methyltransferase</fullName>
    </alternativeName>
    <alternativeName>
        <fullName evidence="1">Ribosomal RNA large subunit methyltransferase N</fullName>
    </alternativeName>
    <alternativeName>
        <fullName evidence="1">tRNA (adenine(37)-C(2))-methyltransferase</fullName>
    </alternativeName>
    <alternativeName>
        <fullName evidence="1">tRNA m2A37 methyltransferase</fullName>
    </alternativeName>
</protein>
<sequence>MSEQLVTPENVTTKDGKINLLDLNRQQMREFFKDLGEKPFRADQVMKWMYHYCCDNFDEMTDINKVLRGKLKEVAEIRAPEVVEEQRSSDGTIKWAIAVGDQRVETVYIPEDDRATLCVSSQVGCALECKFCSTAQQGFNRNLRVSEIIGQVWRAAKIVGAAKVTGQRPITNVVMMGMGEPLLNLNNVVPAMEIMLDDFGFGLSKRRVTLSTSGVVPALDKLGDMIDVALAISLHAPNDEIRDEIVPINKKYNIETFLAAVRRYLEKSNANQGRVTIEYVMLDHVNDGTEHAHQLAELLKDTPCKINLIPWNPFPGAPYGRSSNSRIDRFSKVLMSYGFTTIVRKTRGDDIDAACGQLAGDVIDRTKRTLRKRMQGEAIDIKAV</sequence>
<proteinExistence type="inferred from homology"/>